<dbReference type="EC" id="4.3.1.3" evidence="1"/>
<dbReference type="EMBL" id="AE008922">
    <property type="protein sequence ID" value="AAM40874.1"/>
    <property type="molecule type" value="Genomic_DNA"/>
</dbReference>
<dbReference type="RefSeq" id="NP_636950.1">
    <property type="nucleotide sequence ID" value="NC_003902.1"/>
</dbReference>
<dbReference type="RefSeq" id="WP_011036761.1">
    <property type="nucleotide sequence ID" value="NC_003902.1"/>
</dbReference>
<dbReference type="SMR" id="Q8PAA7"/>
<dbReference type="STRING" id="190485.XCC1579"/>
<dbReference type="EnsemblBacteria" id="AAM40874">
    <property type="protein sequence ID" value="AAM40874"/>
    <property type="gene ID" value="XCC1579"/>
</dbReference>
<dbReference type="KEGG" id="xcc:XCC1579"/>
<dbReference type="PATRIC" id="fig|190485.4.peg.1692"/>
<dbReference type="eggNOG" id="COG2986">
    <property type="taxonomic scope" value="Bacteria"/>
</dbReference>
<dbReference type="HOGENOM" id="CLU_014801_4_0_6"/>
<dbReference type="OrthoDB" id="9806955at2"/>
<dbReference type="UniPathway" id="UPA00379">
    <property type="reaction ID" value="UER00549"/>
</dbReference>
<dbReference type="Proteomes" id="UP000001010">
    <property type="component" value="Chromosome"/>
</dbReference>
<dbReference type="GO" id="GO:0005737">
    <property type="term" value="C:cytoplasm"/>
    <property type="evidence" value="ECO:0007669"/>
    <property type="project" value="UniProtKB-SubCell"/>
</dbReference>
<dbReference type="GO" id="GO:0004397">
    <property type="term" value="F:histidine ammonia-lyase activity"/>
    <property type="evidence" value="ECO:0000318"/>
    <property type="project" value="GO_Central"/>
</dbReference>
<dbReference type="GO" id="GO:0006548">
    <property type="term" value="P:L-histidine catabolic process"/>
    <property type="evidence" value="ECO:0000318"/>
    <property type="project" value="GO_Central"/>
</dbReference>
<dbReference type="GO" id="GO:0019556">
    <property type="term" value="P:L-histidine catabolic process to glutamate and formamide"/>
    <property type="evidence" value="ECO:0007669"/>
    <property type="project" value="UniProtKB-UniPathway"/>
</dbReference>
<dbReference type="GO" id="GO:0019557">
    <property type="term" value="P:L-histidine catabolic process to glutamate and formate"/>
    <property type="evidence" value="ECO:0007669"/>
    <property type="project" value="UniProtKB-UniPathway"/>
</dbReference>
<dbReference type="CDD" id="cd00332">
    <property type="entry name" value="PAL-HAL"/>
    <property type="match status" value="1"/>
</dbReference>
<dbReference type="FunFam" id="1.10.275.10:FF:000005">
    <property type="entry name" value="Histidine ammonia-lyase"/>
    <property type="match status" value="1"/>
</dbReference>
<dbReference type="FunFam" id="1.20.200.10:FF:000003">
    <property type="entry name" value="Histidine ammonia-lyase"/>
    <property type="match status" value="1"/>
</dbReference>
<dbReference type="Gene3D" id="1.20.200.10">
    <property type="entry name" value="Fumarase/aspartase (Central domain)"/>
    <property type="match status" value="1"/>
</dbReference>
<dbReference type="Gene3D" id="1.10.275.10">
    <property type="entry name" value="Fumarase/aspartase (N-terminal domain)"/>
    <property type="match status" value="1"/>
</dbReference>
<dbReference type="HAMAP" id="MF_00229">
    <property type="entry name" value="His_ammonia_lyase"/>
    <property type="match status" value="1"/>
</dbReference>
<dbReference type="InterPro" id="IPR001106">
    <property type="entry name" value="Aromatic_Lyase"/>
</dbReference>
<dbReference type="InterPro" id="IPR024083">
    <property type="entry name" value="Fumarase/histidase_N"/>
</dbReference>
<dbReference type="InterPro" id="IPR005921">
    <property type="entry name" value="HutH"/>
</dbReference>
<dbReference type="InterPro" id="IPR008948">
    <property type="entry name" value="L-Aspartase-like"/>
</dbReference>
<dbReference type="InterPro" id="IPR022313">
    <property type="entry name" value="Phe/His_NH3-lyase_AS"/>
</dbReference>
<dbReference type="NCBIfam" id="TIGR01225">
    <property type="entry name" value="hutH"/>
    <property type="match status" value="1"/>
</dbReference>
<dbReference type="NCBIfam" id="NF006871">
    <property type="entry name" value="PRK09367.1"/>
    <property type="match status" value="1"/>
</dbReference>
<dbReference type="PANTHER" id="PTHR10362">
    <property type="entry name" value="HISTIDINE AMMONIA-LYASE"/>
    <property type="match status" value="1"/>
</dbReference>
<dbReference type="Pfam" id="PF00221">
    <property type="entry name" value="Lyase_aromatic"/>
    <property type="match status" value="1"/>
</dbReference>
<dbReference type="SUPFAM" id="SSF48557">
    <property type="entry name" value="L-aspartase-like"/>
    <property type="match status" value="1"/>
</dbReference>
<dbReference type="PROSITE" id="PS00488">
    <property type="entry name" value="PAL_HISTIDASE"/>
    <property type="match status" value="1"/>
</dbReference>
<gene>
    <name evidence="1" type="primary">hutH</name>
    <name type="ordered locus">XCC1579</name>
</gene>
<evidence type="ECO:0000255" key="1">
    <source>
        <dbReference type="HAMAP-Rule" id="MF_00229"/>
    </source>
</evidence>
<keyword id="KW-0963">Cytoplasm</keyword>
<keyword id="KW-0369">Histidine metabolism</keyword>
<keyword id="KW-0456">Lyase</keyword>
<keyword id="KW-1185">Reference proteome</keyword>
<name>HUTH_XANCP</name>
<organism>
    <name type="scientific">Xanthomonas campestris pv. campestris (strain ATCC 33913 / DSM 3586 / NCPPB 528 / LMG 568 / P 25)</name>
    <dbReference type="NCBI Taxonomy" id="190485"/>
    <lineage>
        <taxon>Bacteria</taxon>
        <taxon>Pseudomonadati</taxon>
        <taxon>Pseudomonadota</taxon>
        <taxon>Gammaproteobacteria</taxon>
        <taxon>Lysobacterales</taxon>
        <taxon>Lysobacteraceae</taxon>
        <taxon>Xanthomonas</taxon>
    </lineage>
</organism>
<sequence length="513" mass="53125">MSASVVLQPGQVTLAQWRALYRGAEVTLDPACAQAVLRSAQTVEAIVARGEPVYGVNTGFGKLASVRIERDDLQTLQRNIVLSHAAGVGDPTPVPVVRLMMALKLTSLAQGASGIQPDTLALLEAMLRQGITPVVPCQGSVGASGDLAPLSHLAAVMIGVGEAFVGDQRLPAADALARAQLQPRVLGAKEGLALLNGTQFSTACALAGLFEIETVLQAALVTGALSVEAAKGSDTPFDARIHALRGQPGQIATAAALRALMAESAIRESHRLGDVRVQDPYCLRCQPQVMGAALDVMRQAARTLEIEANGVSDNPLVFSDTGEALSGGNFHAEPVAFAADMLALAVCEIGSISERRTAMLVDPALSGLPAFLTPRPGLNSGFMIPQVTAAALVSENKQCAYPASVDSIPTSANQEDHVSMAAHGARRLLAMADNAAHVIGIELLAAVQGCDFHAPLRSSAALEAARALLRAQVPTLQDDRYFHPDMLAASALVRSGALATAVGIVLPGVELSA</sequence>
<accession>Q8PAA7</accession>
<proteinExistence type="inferred from homology"/>
<comment type="catalytic activity">
    <reaction evidence="1">
        <text>L-histidine = trans-urocanate + NH4(+)</text>
        <dbReference type="Rhea" id="RHEA:21232"/>
        <dbReference type="ChEBI" id="CHEBI:17771"/>
        <dbReference type="ChEBI" id="CHEBI:28938"/>
        <dbReference type="ChEBI" id="CHEBI:57595"/>
        <dbReference type="EC" id="4.3.1.3"/>
    </reaction>
</comment>
<comment type="pathway">
    <text evidence="1">Amino-acid degradation; L-histidine degradation into L-glutamate; N-formimidoyl-L-glutamate from L-histidine: step 1/3.</text>
</comment>
<comment type="subcellular location">
    <subcellularLocation>
        <location evidence="1">Cytoplasm</location>
    </subcellularLocation>
</comment>
<comment type="PTM">
    <text evidence="1">Contains an active site 4-methylidene-imidazol-5-one (MIO), which is formed autocatalytically by cyclization and dehydration of residues Ala-Ser-Gly.</text>
</comment>
<comment type="similarity">
    <text evidence="1">Belongs to the PAL/histidase family.</text>
</comment>
<protein>
    <recommendedName>
        <fullName evidence="1">Histidine ammonia-lyase</fullName>
        <shortName evidence="1">Histidase</shortName>
        <ecNumber evidence="1">4.3.1.3</ecNumber>
    </recommendedName>
</protein>
<reference key="1">
    <citation type="journal article" date="2002" name="Nature">
        <title>Comparison of the genomes of two Xanthomonas pathogens with differing host specificities.</title>
        <authorList>
            <person name="da Silva A.C.R."/>
            <person name="Ferro J.A."/>
            <person name="Reinach F.C."/>
            <person name="Farah C.S."/>
            <person name="Furlan L.R."/>
            <person name="Quaggio R.B."/>
            <person name="Monteiro-Vitorello C.B."/>
            <person name="Van Sluys M.A."/>
            <person name="Almeida N.F. Jr."/>
            <person name="Alves L.M.C."/>
            <person name="do Amaral A.M."/>
            <person name="Bertolini M.C."/>
            <person name="Camargo L.E.A."/>
            <person name="Camarotte G."/>
            <person name="Cannavan F."/>
            <person name="Cardozo J."/>
            <person name="Chambergo F."/>
            <person name="Ciapina L.P."/>
            <person name="Cicarelli R.M.B."/>
            <person name="Coutinho L.L."/>
            <person name="Cursino-Santos J.R."/>
            <person name="El-Dorry H."/>
            <person name="Faria J.B."/>
            <person name="Ferreira A.J.S."/>
            <person name="Ferreira R.C.C."/>
            <person name="Ferro M.I.T."/>
            <person name="Formighieri E.F."/>
            <person name="Franco M.C."/>
            <person name="Greggio C.C."/>
            <person name="Gruber A."/>
            <person name="Katsuyama A.M."/>
            <person name="Kishi L.T."/>
            <person name="Leite R.P."/>
            <person name="Lemos E.G.M."/>
            <person name="Lemos M.V.F."/>
            <person name="Locali E.C."/>
            <person name="Machado M.A."/>
            <person name="Madeira A.M.B.N."/>
            <person name="Martinez-Rossi N.M."/>
            <person name="Martins E.C."/>
            <person name="Meidanis J."/>
            <person name="Menck C.F.M."/>
            <person name="Miyaki C.Y."/>
            <person name="Moon D.H."/>
            <person name="Moreira L.M."/>
            <person name="Novo M.T.M."/>
            <person name="Okura V.K."/>
            <person name="Oliveira M.C."/>
            <person name="Oliveira V.R."/>
            <person name="Pereira H.A."/>
            <person name="Rossi A."/>
            <person name="Sena J.A.D."/>
            <person name="Silva C."/>
            <person name="de Souza R.F."/>
            <person name="Spinola L.A.F."/>
            <person name="Takita M.A."/>
            <person name="Tamura R.E."/>
            <person name="Teixeira E.C."/>
            <person name="Tezza R.I.D."/>
            <person name="Trindade dos Santos M."/>
            <person name="Truffi D."/>
            <person name="Tsai S.M."/>
            <person name="White F.F."/>
            <person name="Setubal J.C."/>
            <person name="Kitajima J.P."/>
        </authorList>
    </citation>
    <scope>NUCLEOTIDE SEQUENCE [LARGE SCALE GENOMIC DNA]</scope>
    <source>
        <strain>ATCC 33913 / DSM 3586 / NCPPB 528 / LMG 568 / P 25</strain>
    </source>
</reference>
<feature type="chain" id="PRO_0000161052" description="Histidine ammonia-lyase">
    <location>
        <begin position="1"/>
        <end position="513"/>
    </location>
</feature>
<feature type="modified residue" description="2,3-didehydroalanine (Ser)" evidence="1">
    <location>
        <position position="144"/>
    </location>
</feature>
<feature type="cross-link" description="5-imidazolinone (Ala-Gly)" evidence="1">
    <location>
        <begin position="143"/>
        <end position="145"/>
    </location>
</feature>